<name>BIOAB_BACF6</name>
<reference key="1">
    <citation type="journal article" date="2010" name="Microbiology">
        <title>Twenty-eight divergent polysaccharide loci specifying within- and amongst-strain capsule diversity in three strains of Bacteroides fragilis.</title>
        <authorList>
            <person name="Patrick S."/>
            <person name="Blakely G.W."/>
            <person name="Houston S."/>
            <person name="Moore J."/>
            <person name="Abratt V.R."/>
            <person name="Bertalan M."/>
            <person name="Cerdeno-Tarraga A.M."/>
            <person name="Quail M.A."/>
            <person name="Corton N."/>
            <person name="Corton C."/>
            <person name="Bignell A."/>
            <person name="Barron A."/>
            <person name="Clark L."/>
            <person name="Bentley S.D."/>
            <person name="Parkhill J."/>
        </authorList>
    </citation>
    <scope>NUCLEOTIDE SEQUENCE [LARGE SCALE GENOMIC DNA]</scope>
    <source>
        <strain>638R</strain>
    </source>
</reference>
<sequence>MTIEEIKNQVLQGTAISREQAEWLALYPRKEELYDAAHDITTACASQEFDMCSIINARSGRCPENCKWCAQSSHYKTKADVYDLVSAEECLRQAKYNEAQGVNRFSLVTSGRKPSPKNMKELCVAARRMRRHSSIRLCASLGLLDEEELQALYDAGVTRYHCNLETAPSHFDSLCTTHTQEQKLKTLHAARRVGMDLCCGGIIGMGETVEQRIEFAFTLRDLNIQSIPINLLQPIPGTPLEHQSPLSEEEILTTVALFRFINPAAYLRFAGGRSQLTPEAVRKSLYIGINSAIVGDLLTTLGSKVSDDKEMILSEGYHFADSQFDREHLWHPYTSTSNPLPVYKVKRADGATITLESGQTLIEGMSSWWCAVHGYNHPILNQAVQDQLSRMSHVMFGGLTHDPAIELGKLLLPLVPPSMQKIFYADSGSVAVEVALKMAVQYWYAAGKPEKNNFVTIRNGYHGDTWNAMSVCDPVTGMHSIFGSALPIRHFLPAPSSRFGDEWNPEDIRPLEHLLEKHTDELAAFILEPIVQGAGGMRFYHPEYLREAARLCHRYGVLLIFDEIATGFGRTGKLFAWEHAGVEPDIMCIGKALTGGYMTLSAVLTTNEVADCISNHAPGAFMHGPTFMGNPLACAVACASVRLLLTSGWQENVKRIEAQLNRELAPARELPQVADVRVLGAIGVIEMKEPVNMAYLQRRFVEEGIWLRPFGKLIYVMPPFIITPEQLTKLTEGMIRIISNGLPGSQTK</sequence>
<proteinExistence type="inferred from homology"/>
<comment type="function">
    <text evidence="1">Catalyzes two activities which are involved in the biotine biosynthesis: the conversion of dethiobiotin (DTB) to biotin by the insertion of a sulfur atom into dethiobiotin via a radical-based mechanism, and the transfer of the alpha-amino group from S-adenosyl-L-methionine (SAM) to 7-keto-8-aminopelargonic acid (KAPA) to form 7,8-diaminopelargonic acid (DAPA).</text>
</comment>
<comment type="catalytic activity">
    <reaction>
        <text>(4R,5S)-dethiobiotin + (sulfur carrier)-SH + 2 reduced [2Fe-2S]-[ferredoxin] + 2 S-adenosyl-L-methionine = (sulfur carrier)-H + biotin + 2 5'-deoxyadenosine + 2 L-methionine + 2 oxidized [2Fe-2S]-[ferredoxin]</text>
        <dbReference type="Rhea" id="RHEA:22060"/>
        <dbReference type="Rhea" id="RHEA-COMP:10000"/>
        <dbReference type="Rhea" id="RHEA-COMP:10001"/>
        <dbReference type="Rhea" id="RHEA-COMP:14737"/>
        <dbReference type="Rhea" id="RHEA-COMP:14739"/>
        <dbReference type="ChEBI" id="CHEBI:17319"/>
        <dbReference type="ChEBI" id="CHEBI:29917"/>
        <dbReference type="ChEBI" id="CHEBI:33737"/>
        <dbReference type="ChEBI" id="CHEBI:33738"/>
        <dbReference type="ChEBI" id="CHEBI:57586"/>
        <dbReference type="ChEBI" id="CHEBI:57844"/>
        <dbReference type="ChEBI" id="CHEBI:59789"/>
        <dbReference type="ChEBI" id="CHEBI:64428"/>
        <dbReference type="ChEBI" id="CHEBI:149473"/>
        <dbReference type="EC" id="2.8.1.6"/>
    </reaction>
</comment>
<comment type="catalytic activity">
    <reaction>
        <text>(8S)-8-amino-7-oxononanoate + S-adenosyl-L-methionine = S-adenosyl-4-methylsulfanyl-2-oxobutanoate + (7R,8S)-7,8-diammoniononanoate</text>
        <dbReference type="Rhea" id="RHEA:16861"/>
        <dbReference type="ChEBI" id="CHEBI:16490"/>
        <dbReference type="ChEBI" id="CHEBI:59789"/>
        <dbReference type="ChEBI" id="CHEBI:149468"/>
        <dbReference type="ChEBI" id="CHEBI:149469"/>
        <dbReference type="EC" id="2.6.1.62"/>
    </reaction>
</comment>
<comment type="cofactor">
    <cofactor evidence="1">
        <name>[4Fe-4S] cluster</name>
        <dbReference type="ChEBI" id="CHEBI:49883"/>
    </cofactor>
    <text evidence="1">Binds 1 [4Fe-4S] cluster. The cluster is coordinated with 3 cysteines and an exchangeable S-adenosyl-L-methionine.</text>
</comment>
<comment type="cofactor">
    <cofactor evidence="1">
        <name>[2Fe-2S] cluster</name>
        <dbReference type="ChEBI" id="CHEBI:190135"/>
    </cofactor>
    <text evidence="1">Binds 1 [2Fe-2S] cluster. The cluster is coordinated with 3 cysteines and 1 arginine.</text>
</comment>
<comment type="cofactor">
    <cofactor evidence="1">
        <name>pyridoxal 5'-phosphate</name>
        <dbReference type="ChEBI" id="CHEBI:597326"/>
    </cofactor>
</comment>
<comment type="pathway">
    <text>Cofactor biosynthesis; biotin biosynthesis; biotin from 7,8-diaminononanoate: step 2/2.</text>
</comment>
<comment type="pathway">
    <text>Cofactor biosynthesis; biotin biosynthesis; 7,8-diaminononanoate from 8-amino-7-oxononanoate (SAM route): step 1/1.</text>
</comment>
<comment type="subunit">
    <text evidence="1">Homodimer.</text>
</comment>
<comment type="similarity">
    <text evidence="3">In the N-terminal section; belongs to the radical SAM superfamily. Biotin synthase family.</text>
</comment>
<comment type="similarity">
    <text evidence="3">In the C-terminal section; belongs to the class-III pyridoxal-phosphate-dependent aminotransferase family. BioA subfamily.</text>
</comment>
<organism>
    <name type="scientific">Bacteroides fragilis (strain 638R)</name>
    <dbReference type="NCBI Taxonomy" id="862962"/>
    <lineage>
        <taxon>Bacteria</taxon>
        <taxon>Pseudomonadati</taxon>
        <taxon>Bacteroidota</taxon>
        <taxon>Bacteroidia</taxon>
        <taxon>Bacteroidales</taxon>
        <taxon>Bacteroidaceae</taxon>
        <taxon>Bacteroides</taxon>
    </lineage>
</organism>
<protein>
    <recommendedName>
        <fullName>Biotin biosynthesis bifunctional protein BioAB</fullName>
    </recommendedName>
    <domain>
        <recommendedName>
            <fullName>Biotin synthase BioB</fullName>
            <ecNumber>2.8.1.6</ecNumber>
        </recommendedName>
    </domain>
    <domain>
        <recommendedName>
            <fullName>Adenosylmethionine-8-amino-7-oxononanoate aminotransferase BioA</fullName>
            <ecNumber>2.6.1.62</ecNumber>
        </recommendedName>
        <alternativeName>
            <fullName>7,8-diamino-pelargonic acid aminotransferase</fullName>
            <shortName>DAPA AT</shortName>
            <shortName>DAPA aminotransferase</shortName>
        </alternativeName>
        <alternativeName>
            <fullName>7,8-diaminononanoate synthase</fullName>
            <shortName>DANS</shortName>
        </alternativeName>
        <alternativeName>
            <fullName>Diaminopelargonic acid synthase</fullName>
        </alternativeName>
    </domain>
</protein>
<evidence type="ECO:0000250" key="1"/>
<evidence type="ECO:0000255" key="2">
    <source>
        <dbReference type="PROSITE-ProRule" id="PRU01266"/>
    </source>
</evidence>
<evidence type="ECO:0000305" key="3"/>
<keyword id="KW-0001">2Fe-2S</keyword>
<keyword id="KW-0004">4Fe-4S</keyword>
<keyword id="KW-0032">Aminotransferase</keyword>
<keyword id="KW-0093">Biotin biosynthesis</keyword>
<keyword id="KW-0408">Iron</keyword>
<keyword id="KW-0411">Iron-sulfur</keyword>
<keyword id="KW-0479">Metal-binding</keyword>
<keyword id="KW-0511">Multifunctional enzyme</keyword>
<keyword id="KW-0663">Pyridoxal phosphate</keyword>
<keyword id="KW-0949">S-adenosyl-L-methionine</keyword>
<keyword id="KW-0808">Transferase</keyword>
<dbReference type="EC" id="2.8.1.6"/>
<dbReference type="EC" id="2.6.1.62"/>
<dbReference type="EMBL" id="FQ312004">
    <property type="protein sequence ID" value="CBW22147.1"/>
    <property type="molecule type" value="Genomic_DNA"/>
</dbReference>
<dbReference type="SMR" id="E1WTS4"/>
<dbReference type="KEGG" id="bfg:BF638R_1618"/>
<dbReference type="PATRIC" id="fig|862962.3.peg.1624"/>
<dbReference type="HOGENOM" id="CLU_016922_9_1_10"/>
<dbReference type="UniPathway" id="UPA00078">
    <property type="reaction ID" value="UER00160"/>
</dbReference>
<dbReference type="UniPathway" id="UPA00078">
    <property type="reaction ID" value="UER00162"/>
</dbReference>
<dbReference type="Proteomes" id="UP000008560">
    <property type="component" value="Chromosome"/>
</dbReference>
<dbReference type="GO" id="GO:0005737">
    <property type="term" value="C:cytoplasm"/>
    <property type="evidence" value="ECO:0007669"/>
    <property type="project" value="UniProtKB-UniRule"/>
</dbReference>
<dbReference type="GO" id="GO:0051537">
    <property type="term" value="F:2 iron, 2 sulfur cluster binding"/>
    <property type="evidence" value="ECO:0007669"/>
    <property type="project" value="UniProtKB-KW"/>
</dbReference>
<dbReference type="GO" id="GO:0051539">
    <property type="term" value="F:4 iron, 4 sulfur cluster binding"/>
    <property type="evidence" value="ECO:0007669"/>
    <property type="project" value="UniProtKB-KW"/>
</dbReference>
<dbReference type="GO" id="GO:0004015">
    <property type="term" value="F:adenosylmethionine-8-amino-7-oxononanoate transaminase activity"/>
    <property type="evidence" value="ECO:0007669"/>
    <property type="project" value="UniProtKB-UniRule"/>
</dbReference>
<dbReference type="GO" id="GO:0004076">
    <property type="term" value="F:biotin synthase activity"/>
    <property type="evidence" value="ECO:0007669"/>
    <property type="project" value="UniProtKB-UniRule"/>
</dbReference>
<dbReference type="GO" id="GO:0005506">
    <property type="term" value="F:iron ion binding"/>
    <property type="evidence" value="ECO:0007669"/>
    <property type="project" value="UniProtKB-UniRule"/>
</dbReference>
<dbReference type="GO" id="GO:0030170">
    <property type="term" value="F:pyridoxal phosphate binding"/>
    <property type="evidence" value="ECO:0007669"/>
    <property type="project" value="UniProtKB-UniRule"/>
</dbReference>
<dbReference type="GO" id="GO:0009102">
    <property type="term" value="P:biotin biosynthetic process"/>
    <property type="evidence" value="ECO:0007669"/>
    <property type="project" value="UniProtKB-UniRule"/>
</dbReference>
<dbReference type="CDD" id="cd00610">
    <property type="entry name" value="OAT_like"/>
    <property type="match status" value="1"/>
</dbReference>
<dbReference type="CDD" id="cd01335">
    <property type="entry name" value="Radical_SAM"/>
    <property type="match status" value="1"/>
</dbReference>
<dbReference type="FunFam" id="3.40.640.10:FF:000041">
    <property type="entry name" value="Adenosylmethionine-8-amino-7-oxononanoate aminotransferase"/>
    <property type="match status" value="1"/>
</dbReference>
<dbReference type="FunFam" id="3.20.20.70:FF:000026">
    <property type="entry name" value="Biotin synthase"/>
    <property type="match status" value="1"/>
</dbReference>
<dbReference type="Gene3D" id="3.20.20.70">
    <property type="entry name" value="Aldolase class I"/>
    <property type="match status" value="1"/>
</dbReference>
<dbReference type="Gene3D" id="3.90.1150.10">
    <property type="entry name" value="Aspartate Aminotransferase, domain 1"/>
    <property type="match status" value="1"/>
</dbReference>
<dbReference type="Gene3D" id="3.40.640.10">
    <property type="entry name" value="Type I PLP-dependent aspartate aminotransferase-like (Major domain)"/>
    <property type="match status" value="1"/>
</dbReference>
<dbReference type="HAMAP" id="MF_00834">
    <property type="entry name" value="BioA"/>
    <property type="match status" value="1"/>
</dbReference>
<dbReference type="HAMAP" id="MF_01694">
    <property type="entry name" value="BioB"/>
    <property type="match status" value="1"/>
</dbReference>
<dbReference type="InterPro" id="IPR013785">
    <property type="entry name" value="Aldolase_TIM"/>
</dbReference>
<dbReference type="InterPro" id="IPR005814">
    <property type="entry name" value="Aminotrans_3"/>
</dbReference>
<dbReference type="InterPro" id="IPR049704">
    <property type="entry name" value="Aminotrans_3_PPA_site"/>
</dbReference>
<dbReference type="InterPro" id="IPR010722">
    <property type="entry name" value="BATS_dom"/>
</dbReference>
<dbReference type="InterPro" id="IPR005815">
    <property type="entry name" value="BioA"/>
</dbReference>
<dbReference type="InterPro" id="IPR002684">
    <property type="entry name" value="Biotin_synth/BioAB"/>
</dbReference>
<dbReference type="InterPro" id="IPR006638">
    <property type="entry name" value="Elp3/MiaA/NifB-like_rSAM"/>
</dbReference>
<dbReference type="InterPro" id="IPR015424">
    <property type="entry name" value="PyrdxlP-dep_Trfase"/>
</dbReference>
<dbReference type="InterPro" id="IPR015421">
    <property type="entry name" value="PyrdxlP-dep_Trfase_major"/>
</dbReference>
<dbReference type="InterPro" id="IPR015422">
    <property type="entry name" value="PyrdxlP-dep_Trfase_small"/>
</dbReference>
<dbReference type="InterPro" id="IPR007197">
    <property type="entry name" value="rSAM"/>
</dbReference>
<dbReference type="NCBIfam" id="TIGR00508">
    <property type="entry name" value="bioA"/>
    <property type="match status" value="1"/>
</dbReference>
<dbReference type="NCBIfam" id="TIGR00433">
    <property type="entry name" value="bioB"/>
    <property type="match status" value="1"/>
</dbReference>
<dbReference type="NCBIfam" id="NF004624">
    <property type="entry name" value="PRK05964.1"/>
    <property type="match status" value="1"/>
</dbReference>
<dbReference type="NCBIfam" id="NF005940">
    <property type="entry name" value="PRK07986.1"/>
    <property type="match status" value="1"/>
</dbReference>
<dbReference type="PANTHER" id="PTHR42684">
    <property type="entry name" value="ADENOSYLMETHIONINE-8-AMINO-7-OXONONANOATE AMINOTRANSFERASE"/>
    <property type="match status" value="1"/>
</dbReference>
<dbReference type="PANTHER" id="PTHR42684:SF17">
    <property type="entry name" value="ADENOSYLMETHIONINE-8-AMINO-7-OXONONANOATE AMINOTRANSFERASE"/>
    <property type="match status" value="1"/>
</dbReference>
<dbReference type="Pfam" id="PF00202">
    <property type="entry name" value="Aminotran_3"/>
    <property type="match status" value="1"/>
</dbReference>
<dbReference type="Pfam" id="PF06968">
    <property type="entry name" value="BATS"/>
    <property type="match status" value="1"/>
</dbReference>
<dbReference type="Pfam" id="PF04055">
    <property type="entry name" value="Radical_SAM"/>
    <property type="match status" value="1"/>
</dbReference>
<dbReference type="SFLD" id="SFLDG01082">
    <property type="entry name" value="B12-binding_domain_containing"/>
    <property type="match status" value="1"/>
</dbReference>
<dbReference type="SFLD" id="SFLDG01278">
    <property type="entry name" value="biotin_synthase_like"/>
    <property type="match status" value="1"/>
</dbReference>
<dbReference type="SFLD" id="SFLDS00029">
    <property type="entry name" value="Radical_SAM"/>
    <property type="match status" value="1"/>
</dbReference>
<dbReference type="SMART" id="SM00876">
    <property type="entry name" value="BATS"/>
    <property type="match status" value="1"/>
</dbReference>
<dbReference type="SMART" id="SM00729">
    <property type="entry name" value="Elp3"/>
    <property type="match status" value="1"/>
</dbReference>
<dbReference type="SUPFAM" id="SSF53383">
    <property type="entry name" value="PLP-dependent transferases"/>
    <property type="match status" value="1"/>
</dbReference>
<dbReference type="SUPFAM" id="SSF102114">
    <property type="entry name" value="Radical SAM enzymes"/>
    <property type="match status" value="1"/>
</dbReference>
<dbReference type="PROSITE" id="PS00600">
    <property type="entry name" value="AA_TRANSFER_CLASS_3"/>
    <property type="match status" value="1"/>
</dbReference>
<dbReference type="PROSITE" id="PS51918">
    <property type="entry name" value="RADICAL_SAM"/>
    <property type="match status" value="1"/>
</dbReference>
<gene>
    <name type="primary">bioB</name>
    <name type="ordered locus">BF638R_1618</name>
</gene>
<feature type="chain" id="PRO_0000411133" description="Biotin biosynthesis bifunctional protein BioAB">
    <location>
        <begin position="1"/>
        <end position="748"/>
    </location>
</feature>
<feature type="domain" description="Radical SAM core" evidence="2">
    <location>
        <begin position="44"/>
        <end position="270"/>
    </location>
</feature>
<feature type="binding site" evidence="1">
    <location>
        <position position="62"/>
    </location>
    <ligand>
        <name>[4Fe-4S] cluster</name>
        <dbReference type="ChEBI" id="CHEBI:49883"/>
        <note>4Fe-4S-S-AdoMet</note>
    </ligand>
</feature>
<feature type="binding site" evidence="1">
    <location>
        <position position="66"/>
    </location>
    <ligand>
        <name>[4Fe-4S] cluster</name>
        <dbReference type="ChEBI" id="CHEBI:49883"/>
        <note>4Fe-4S-S-AdoMet</note>
    </ligand>
</feature>
<feature type="binding site" evidence="1">
    <location>
        <position position="69"/>
    </location>
    <ligand>
        <name>[4Fe-4S] cluster</name>
        <dbReference type="ChEBI" id="CHEBI:49883"/>
        <note>4Fe-4S-S-AdoMet</note>
    </ligand>
</feature>
<feature type="binding site" evidence="1">
    <location>
        <position position="106"/>
    </location>
    <ligand>
        <name>[2Fe-2S] cluster</name>
        <dbReference type="ChEBI" id="CHEBI:190135"/>
    </ligand>
</feature>
<feature type="binding site" evidence="1">
    <location>
        <position position="138"/>
    </location>
    <ligand>
        <name>[2Fe-2S] cluster</name>
        <dbReference type="ChEBI" id="CHEBI:190135"/>
    </ligand>
</feature>
<feature type="binding site" evidence="1">
    <location>
        <position position="198"/>
    </location>
    <ligand>
        <name>[2Fe-2S] cluster</name>
        <dbReference type="ChEBI" id="CHEBI:190135"/>
    </ligand>
</feature>
<feature type="binding site" evidence="1">
    <location>
        <position position="268"/>
    </location>
    <ligand>
        <name>[2Fe-2S] cluster</name>
        <dbReference type="ChEBI" id="CHEBI:190135"/>
    </ligand>
</feature>
<feature type="binding site" evidence="1">
    <location>
        <position position="368"/>
    </location>
    <ligand>
        <name>(8S)-8-amino-7-oxononanoate</name>
        <dbReference type="ChEBI" id="CHEBI:149468"/>
    </ligand>
</feature>
<feature type="binding site" evidence="1">
    <location>
        <begin position="428"/>
        <end position="429"/>
    </location>
    <ligand>
        <name>pyridoxal 5'-phosphate</name>
        <dbReference type="ChEBI" id="CHEBI:597326"/>
    </ligand>
</feature>
<feature type="binding site" evidence="1">
    <location>
        <position position="461"/>
    </location>
    <ligand>
        <name>(8S)-8-amino-7-oxononanoate</name>
        <dbReference type="ChEBI" id="CHEBI:149468"/>
    </ligand>
</feature>
<feature type="binding site" evidence="1">
    <location>
        <position position="562"/>
    </location>
    <ligand>
        <name>pyridoxal 5'-phosphate</name>
        <dbReference type="ChEBI" id="CHEBI:597326"/>
    </ligand>
</feature>
<feature type="binding site" evidence="1">
    <location>
        <position position="591"/>
    </location>
    <ligand>
        <name>(8S)-8-amino-7-oxononanoate</name>
        <dbReference type="ChEBI" id="CHEBI:149468"/>
    </ligand>
</feature>
<feature type="binding site" evidence="1">
    <location>
        <position position="624"/>
    </location>
    <ligand>
        <name>(8S)-8-amino-7-oxononanoate</name>
        <dbReference type="ChEBI" id="CHEBI:149468"/>
    </ligand>
</feature>
<feature type="binding site" evidence="1">
    <location>
        <begin position="625"/>
        <end position="626"/>
    </location>
    <ligand>
        <name>pyridoxal 5'-phosphate</name>
        <dbReference type="ChEBI" id="CHEBI:597326"/>
    </ligand>
</feature>
<feature type="binding site" evidence="1">
    <location>
        <position position="708"/>
    </location>
    <ligand>
        <name>(8S)-8-amino-7-oxononanoate</name>
        <dbReference type="ChEBI" id="CHEBI:149468"/>
    </ligand>
</feature>
<feature type="site" description="Participates in the substrate recognition with KAPA and in a stacking interaction with the adenine ring of SAM" evidence="1">
    <location>
        <position position="333"/>
    </location>
</feature>
<feature type="modified residue" description="N6-(pyridoxal phosphate)lysine" evidence="1">
    <location>
        <position position="591"/>
    </location>
</feature>
<accession>E1WTS4</accession>